<sequence>MTTDTIVAQATAPGRGGVGIIRVSGPKANQVALEVTGKTLKPRYAEYLPFQAEDGTVLDQGIALYFPNPHSFTGEDVLELQGHGGPVVMDMLIKRILGIAGVRAARPGEFSERAFLNDKMDLTQAEAIADLIDASSEEAAKSALQSLQGQFSQRIQTLVESLIHLRIYVEAAIDFPEEEIDFLADGKVAGDLQAIIDNLDAVRKEANQGAIMREGMKVVIAGRPNAGKSSLLNALSGKESAIVTDIAGTTRDVLREHIHIDGMPLHIIDTAGLRDASDEVEKIGIERAWDEIAQADRVLFMVDGTTTDATDPKEIWPDFVDRLPESIGMTVIRNKADQTGEDMGICHVNDPTLIRLSAKTGAGVDALRNHLKECMGFSGNTEGGFMARRRHLDALERAAQHLQIGQEQLEGYMAGEILAEELRITQQHLNEITGEFSSDDLLGRIFSSFCIGK</sequence>
<gene>
    <name evidence="1" type="primary">mnmE</name>
    <name evidence="1" type="synonym">thdF</name>
    <name evidence="1" type="synonym">trmE</name>
    <name type="ordered locus">VP0002</name>
</gene>
<reference key="1">
    <citation type="journal article" date="2003" name="Lancet">
        <title>Genome sequence of Vibrio parahaemolyticus: a pathogenic mechanism distinct from that of V. cholerae.</title>
        <authorList>
            <person name="Makino K."/>
            <person name="Oshima K."/>
            <person name="Kurokawa K."/>
            <person name="Yokoyama K."/>
            <person name="Uda T."/>
            <person name="Tagomori K."/>
            <person name="Iijima Y."/>
            <person name="Najima M."/>
            <person name="Nakano M."/>
            <person name="Yamashita A."/>
            <person name="Kubota Y."/>
            <person name="Kimura S."/>
            <person name="Yasunaga T."/>
            <person name="Honda T."/>
            <person name="Shinagawa H."/>
            <person name="Hattori M."/>
            <person name="Iida T."/>
        </authorList>
    </citation>
    <scope>NUCLEOTIDE SEQUENCE [LARGE SCALE GENOMIC DNA]</scope>
    <source>
        <strain>RIMD 2210633</strain>
    </source>
</reference>
<accession>Q87TR6</accession>
<organism>
    <name type="scientific">Vibrio parahaemolyticus serotype O3:K6 (strain RIMD 2210633)</name>
    <dbReference type="NCBI Taxonomy" id="223926"/>
    <lineage>
        <taxon>Bacteria</taxon>
        <taxon>Pseudomonadati</taxon>
        <taxon>Pseudomonadota</taxon>
        <taxon>Gammaproteobacteria</taxon>
        <taxon>Vibrionales</taxon>
        <taxon>Vibrionaceae</taxon>
        <taxon>Vibrio</taxon>
    </lineage>
</organism>
<name>MNME_VIBPA</name>
<keyword id="KW-0963">Cytoplasm</keyword>
<keyword id="KW-0342">GTP-binding</keyword>
<keyword id="KW-0378">Hydrolase</keyword>
<keyword id="KW-0460">Magnesium</keyword>
<keyword id="KW-0479">Metal-binding</keyword>
<keyword id="KW-0547">Nucleotide-binding</keyword>
<keyword id="KW-0630">Potassium</keyword>
<keyword id="KW-0819">tRNA processing</keyword>
<protein>
    <recommendedName>
        <fullName evidence="1">tRNA modification GTPase MnmE</fullName>
        <ecNumber evidence="1">3.6.-.-</ecNumber>
    </recommendedName>
</protein>
<comment type="function">
    <text evidence="1">Exhibits a very high intrinsic GTPase hydrolysis rate. Involved in the addition of a carboxymethylaminomethyl (cmnm) group at the wobble position (U34) of certain tRNAs, forming tRNA-cmnm(5)s(2)U34.</text>
</comment>
<comment type="cofactor">
    <cofactor evidence="1">
        <name>K(+)</name>
        <dbReference type="ChEBI" id="CHEBI:29103"/>
    </cofactor>
    <text evidence="1">Binds 1 potassium ion per subunit.</text>
</comment>
<comment type="subunit">
    <text evidence="1">Homodimer. Heterotetramer of two MnmE and two MnmG subunits.</text>
</comment>
<comment type="subcellular location">
    <subcellularLocation>
        <location evidence="1">Cytoplasm</location>
    </subcellularLocation>
</comment>
<comment type="similarity">
    <text evidence="1">Belongs to the TRAFAC class TrmE-Era-EngA-EngB-Septin-like GTPase superfamily. TrmE GTPase family.</text>
</comment>
<proteinExistence type="inferred from homology"/>
<dbReference type="EC" id="3.6.-.-" evidence="1"/>
<dbReference type="EMBL" id="BA000031">
    <property type="protein sequence ID" value="BAC58265.1"/>
    <property type="molecule type" value="Genomic_DNA"/>
</dbReference>
<dbReference type="RefSeq" id="NP_796381.1">
    <property type="nucleotide sequence ID" value="NC_004603.1"/>
</dbReference>
<dbReference type="RefSeq" id="WP_005458483.1">
    <property type="nucleotide sequence ID" value="NC_004603.1"/>
</dbReference>
<dbReference type="SMR" id="Q87TR6"/>
<dbReference type="GeneID" id="1187458"/>
<dbReference type="KEGG" id="vpa:VP0002"/>
<dbReference type="PATRIC" id="fig|223926.6.peg.2"/>
<dbReference type="eggNOG" id="COG0486">
    <property type="taxonomic scope" value="Bacteria"/>
</dbReference>
<dbReference type="HOGENOM" id="CLU_019624_4_1_6"/>
<dbReference type="Proteomes" id="UP000002493">
    <property type="component" value="Chromosome 1"/>
</dbReference>
<dbReference type="GO" id="GO:0005829">
    <property type="term" value="C:cytosol"/>
    <property type="evidence" value="ECO:0007669"/>
    <property type="project" value="TreeGrafter"/>
</dbReference>
<dbReference type="GO" id="GO:0005525">
    <property type="term" value="F:GTP binding"/>
    <property type="evidence" value="ECO:0007669"/>
    <property type="project" value="UniProtKB-UniRule"/>
</dbReference>
<dbReference type="GO" id="GO:0003924">
    <property type="term" value="F:GTPase activity"/>
    <property type="evidence" value="ECO:0007669"/>
    <property type="project" value="UniProtKB-UniRule"/>
</dbReference>
<dbReference type="GO" id="GO:0046872">
    <property type="term" value="F:metal ion binding"/>
    <property type="evidence" value="ECO:0007669"/>
    <property type="project" value="UniProtKB-KW"/>
</dbReference>
<dbReference type="GO" id="GO:0030488">
    <property type="term" value="P:tRNA methylation"/>
    <property type="evidence" value="ECO:0007669"/>
    <property type="project" value="TreeGrafter"/>
</dbReference>
<dbReference type="GO" id="GO:0002098">
    <property type="term" value="P:tRNA wobble uridine modification"/>
    <property type="evidence" value="ECO:0007669"/>
    <property type="project" value="TreeGrafter"/>
</dbReference>
<dbReference type="CDD" id="cd04164">
    <property type="entry name" value="trmE"/>
    <property type="match status" value="1"/>
</dbReference>
<dbReference type="CDD" id="cd14858">
    <property type="entry name" value="TrmE_N"/>
    <property type="match status" value="1"/>
</dbReference>
<dbReference type="FunFam" id="3.30.1360.120:FF:000001">
    <property type="entry name" value="tRNA modification GTPase MnmE"/>
    <property type="match status" value="1"/>
</dbReference>
<dbReference type="FunFam" id="3.40.50.300:FF:000249">
    <property type="entry name" value="tRNA modification GTPase MnmE"/>
    <property type="match status" value="1"/>
</dbReference>
<dbReference type="Gene3D" id="3.40.50.300">
    <property type="entry name" value="P-loop containing nucleotide triphosphate hydrolases"/>
    <property type="match status" value="1"/>
</dbReference>
<dbReference type="Gene3D" id="3.30.1360.120">
    <property type="entry name" value="Probable tRNA modification gtpase trme, domain 1"/>
    <property type="match status" value="1"/>
</dbReference>
<dbReference type="Gene3D" id="1.20.120.430">
    <property type="entry name" value="tRNA modification GTPase MnmE domain 2"/>
    <property type="match status" value="1"/>
</dbReference>
<dbReference type="HAMAP" id="MF_00379">
    <property type="entry name" value="GTPase_MnmE"/>
    <property type="match status" value="1"/>
</dbReference>
<dbReference type="InterPro" id="IPR031168">
    <property type="entry name" value="G_TrmE"/>
</dbReference>
<dbReference type="InterPro" id="IPR006073">
    <property type="entry name" value="GTP-bd"/>
</dbReference>
<dbReference type="InterPro" id="IPR018948">
    <property type="entry name" value="GTP-bd_TrmE_N"/>
</dbReference>
<dbReference type="InterPro" id="IPR004520">
    <property type="entry name" value="GTPase_MnmE"/>
</dbReference>
<dbReference type="InterPro" id="IPR027368">
    <property type="entry name" value="MnmE_dom2"/>
</dbReference>
<dbReference type="InterPro" id="IPR025867">
    <property type="entry name" value="MnmE_helical"/>
</dbReference>
<dbReference type="InterPro" id="IPR027417">
    <property type="entry name" value="P-loop_NTPase"/>
</dbReference>
<dbReference type="InterPro" id="IPR005225">
    <property type="entry name" value="Small_GTP-bd"/>
</dbReference>
<dbReference type="InterPro" id="IPR027266">
    <property type="entry name" value="TrmE/GcvT_dom1"/>
</dbReference>
<dbReference type="NCBIfam" id="TIGR00450">
    <property type="entry name" value="mnmE_trmE_thdF"/>
    <property type="match status" value="1"/>
</dbReference>
<dbReference type="NCBIfam" id="NF003661">
    <property type="entry name" value="PRK05291.1-3"/>
    <property type="match status" value="1"/>
</dbReference>
<dbReference type="NCBIfam" id="TIGR00231">
    <property type="entry name" value="small_GTP"/>
    <property type="match status" value="1"/>
</dbReference>
<dbReference type="PANTHER" id="PTHR42714">
    <property type="entry name" value="TRNA MODIFICATION GTPASE GTPBP3"/>
    <property type="match status" value="1"/>
</dbReference>
<dbReference type="PANTHER" id="PTHR42714:SF2">
    <property type="entry name" value="TRNA MODIFICATION GTPASE GTPBP3, MITOCHONDRIAL"/>
    <property type="match status" value="1"/>
</dbReference>
<dbReference type="Pfam" id="PF01926">
    <property type="entry name" value="MMR_HSR1"/>
    <property type="match status" value="1"/>
</dbReference>
<dbReference type="Pfam" id="PF12631">
    <property type="entry name" value="MnmE_helical"/>
    <property type="match status" value="1"/>
</dbReference>
<dbReference type="Pfam" id="PF10396">
    <property type="entry name" value="TrmE_N"/>
    <property type="match status" value="1"/>
</dbReference>
<dbReference type="SUPFAM" id="SSF52540">
    <property type="entry name" value="P-loop containing nucleoside triphosphate hydrolases"/>
    <property type="match status" value="1"/>
</dbReference>
<dbReference type="SUPFAM" id="SSF116878">
    <property type="entry name" value="TrmE connector domain"/>
    <property type="match status" value="1"/>
</dbReference>
<dbReference type="PROSITE" id="PS51709">
    <property type="entry name" value="G_TRME"/>
    <property type="match status" value="1"/>
</dbReference>
<evidence type="ECO:0000255" key="1">
    <source>
        <dbReference type="HAMAP-Rule" id="MF_00379"/>
    </source>
</evidence>
<feature type="chain" id="PRO_0000188944" description="tRNA modification GTPase MnmE">
    <location>
        <begin position="1"/>
        <end position="453"/>
    </location>
</feature>
<feature type="domain" description="TrmE-type G">
    <location>
        <begin position="215"/>
        <end position="376"/>
    </location>
</feature>
<feature type="binding site" evidence="1">
    <location>
        <position position="22"/>
    </location>
    <ligand>
        <name>(6S)-5-formyl-5,6,7,8-tetrahydrofolate</name>
        <dbReference type="ChEBI" id="CHEBI:57457"/>
    </ligand>
</feature>
<feature type="binding site" evidence="1">
    <location>
        <position position="79"/>
    </location>
    <ligand>
        <name>(6S)-5-formyl-5,6,7,8-tetrahydrofolate</name>
        <dbReference type="ChEBI" id="CHEBI:57457"/>
    </ligand>
</feature>
<feature type="binding site" evidence="1">
    <location>
        <position position="119"/>
    </location>
    <ligand>
        <name>(6S)-5-formyl-5,6,7,8-tetrahydrofolate</name>
        <dbReference type="ChEBI" id="CHEBI:57457"/>
    </ligand>
</feature>
<feature type="binding site" evidence="1">
    <location>
        <begin position="225"/>
        <end position="230"/>
    </location>
    <ligand>
        <name>GTP</name>
        <dbReference type="ChEBI" id="CHEBI:37565"/>
    </ligand>
</feature>
<feature type="binding site" evidence="1">
    <location>
        <position position="225"/>
    </location>
    <ligand>
        <name>K(+)</name>
        <dbReference type="ChEBI" id="CHEBI:29103"/>
    </ligand>
</feature>
<feature type="binding site" evidence="1">
    <location>
        <position position="229"/>
    </location>
    <ligand>
        <name>Mg(2+)</name>
        <dbReference type="ChEBI" id="CHEBI:18420"/>
    </ligand>
</feature>
<feature type="binding site" evidence="1">
    <location>
        <begin position="244"/>
        <end position="250"/>
    </location>
    <ligand>
        <name>GTP</name>
        <dbReference type="ChEBI" id="CHEBI:37565"/>
    </ligand>
</feature>
<feature type="binding site" evidence="1">
    <location>
        <position position="244"/>
    </location>
    <ligand>
        <name>K(+)</name>
        <dbReference type="ChEBI" id="CHEBI:29103"/>
    </ligand>
</feature>
<feature type="binding site" evidence="1">
    <location>
        <position position="246"/>
    </location>
    <ligand>
        <name>K(+)</name>
        <dbReference type="ChEBI" id="CHEBI:29103"/>
    </ligand>
</feature>
<feature type="binding site" evidence="1">
    <location>
        <position position="249"/>
    </location>
    <ligand>
        <name>K(+)</name>
        <dbReference type="ChEBI" id="CHEBI:29103"/>
    </ligand>
</feature>
<feature type="binding site" evidence="1">
    <location>
        <position position="250"/>
    </location>
    <ligand>
        <name>Mg(2+)</name>
        <dbReference type="ChEBI" id="CHEBI:18420"/>
    </ligand>
</feature>
<feature type="binding site" evidence="1">
    <location>
        <begin position="269"/>
        <end position="272"/>
    </location>
    <ligand>
        <name>GTP</name>
        <dbReference type="ChEBI" id="CHEBI:37565"/>
    </ligand>
</feature>
<feature type="binding site" evidence="1">
    <location>
        <begin position="334"/>
        <end position="337"/>
    </location>
    <ligand>
        <name>GTP</name>
        <dbReference type="ChEBI" id="CHEBI:37565"/>
    </ligand>
</feature>
<feature type="binding site" evidence="1">
    <location>
        <position position="453"/>
    </location>
    <ligand>
        <name>(6S)-5-formyl-5,6,7,8-tetrahydrofolate</name>
        <dbReference type="ChEBI" id="CHEBI:57457"/>
    </ligand>
</feature>